<reference key="1">
    <citation type="journal article" date="2003" name="Nature">
        <title>The genome sequence of the filamentous fungus Neurospora crassa.</title>
        <authorList>
            <person name="Galagan J.E."/>
            <person name="Calvo S.E."/>
            <person name="Borkovich K.A."/>
            <person name="Selker E.U."/>
            <person name="Read N.D."/>
            <person name="Jaffe D.B."/>
            <person name="FitzHugh W."/>
            <person name="Ma L.-J."/>
            <person name="Smirnov S."/>
            <person name="Purcell S."/>
            <person name="Rehman B."/>
            <person name="Elkins T."/>
            <person name="Engels R."/>
            <person name="Wang S."/>
            <person name="Nielsen C.B."/>
            <person name="Butler J."/>
            <person name="Endrizzi M."/>
            <person name="Qui D."/>
            <person name="Ianakiev P."/>
            <person name="Bell-Pedersen D."/>
            <person name="Nelson M.A."/>
            <person name="Werner-Washburne M."/>
            <person name="Selitrennikoff C.P."/>
            <person name="Kinsey J.A."/>
            <person name="Braun E.L."/>
            <person name="Zelter A."/>
            <person name="Schulte U."/>
            <person name="Kothe G.O."/>
            <person name="Jedd G."/>
            <person name="Mewes H.-W."/>
            <person name="Staben C."/>
            <person name="Marcotte E."/>
            <person name="Greenberg D."/>
            <person name="Roy A."/>
            <person name="Foley K."/>
            <person name="Naylor J."/>
            <person name="Stange-Thomann N."/>
            <person name="Barrett R."/>
            <person name="Gnerre S."/>
            <person name="Kamal M."/>
            <person name="Kamvysselis M."/>
            <person name="Mauceli E.W."/>
            <person name="Bielke C."/>
            <person name="Rudd S."/>
            <person name="Frishman D."/>
            <person name="Krystofova S."/>
            <person name="Rasmussen C."/>
            <person name="Metzenberg R.L."/>
            <person name="Perkins D.D."/>
            <person name="Kroken S."/>
            <person name="Cogoni C."/>
            <person name="Macino G."/>
            <person name="Catcheside D.E.A."/>
            <person name="Li W."/>
            <person name="Pratt R.J."/>
            <person name="Osmani S.A."/>
            <person name="DeSouza C.P.C."/>
            <person name="Glass N.L."/>
            <person name="Orbach M.J."/>
            <person name="Berglund J.A."/>
            <person name="Voelker R."/>
            <person name="Yarden O."/>
            <person name="Plamann M."/>
            <person name="Seiler S."/>
            <person name="Dunlap J.C."/>
            <person name="Radford A."/>
            <person name="Aramayo R."/>
            <person name="Natvig D.O."/>
            <person name="Alex L.A."/>
            <person name="Mannhaupt G."/>
            <person name="Ebbole D.J."/>
            <person name="Freitag M."/>
            <person name="Paulsen I."/>
            <person name="Sachs M.S."/>
            <person name="Lander E.S."/>
            <person name="Nusbaum C."/>
            <person name="Birren B.W."/>
        </authorList>
    </citation>
    <scope>NUCLEOTIDE SEQUENCE [LARGE SCALE GENOMIC DNA]</scope>
    <source>
        <strain>ATCC 24698 / 74-OR23-1A / CBS 708.71 / DSM 1257 / FGSC 987</strain>
    </source>
</reference>
<reference evidence="5 6 7 8" key="2">
    <citation type="journal article" date="2020" name="Nat. Commun.">
        <title>Analysis of translating mitoribosome reveals functional characteristics of translation in mitochondria of fungi.</title>
        <authorList>
            <person name="Itoh Y."/>
            <person name="Naschberger A."/>
            <person name="Mortezaei N."/>
            <person name="Herrmann J.M."/>
            <person name="Amunts A."/>
        </authorList>
    </citation>
    <scope>STRUCTURE BY ELECTRON MICROSCOPY (2.74 ANGSTROMS)</scope>
</reference>
<accession>Q1K7P9</accession>
<gene>
    <name type="primary">mrpl34</name>
    <name type="ORF">NCU03638</name>
</gene>
<dbReference type="EMBL" id="CM002240">
    <property type="protein sequence ID" value="EAA32129.1"/>
    <property type="molecule type" value="Genomic_DNA"/>
</dbReference>
<dbReference type="RefSeq" id="XP_961365.1">
    <property type="nucleotide sequence ID" value="XM_956272.3"/>
</dbReference>
<dbReference type="PDB" id="6YWE">
    <property type="method" value="EM"/>
    <property type="resolution" value="2.99 A"/>
    <property type="chains" value="Y=1-140"/>
</dbReference>
<dbReference type="PDB" id="6YWS">
    <property type="method" value="EM"/>
    <property type="resolution" value="2.74 A"/>
    <property type="chains" value="Y=1-140"/>
</dbReference>
<dbReference type="PDB" id="6YWV">
    <property type="method" value="EM"/>
    <property type="resolution" value="3.03 A"/>
    <property type="chains" value="Y=1-140"/>
</dbReference>
<dbReference type="PDB" id="6YWX">
    <property type="method" value="EM"/>
    <property type="resolution" value="3.10 A"/>
    <property type="chains" value="Y=1-140"/>
</dbReference>
<dbReference type="PDB" id="6YWY">
    <property type="method" value="EM"/>
    <property type="resolution" value="3.05 A"/>
    <property type="chains" value="Y=1-140"/>
</dbReference>
<dbReference type="PDBsum" id="6YWE"/>
<dbReference type="PDBsum" id="6YWS"/>
<dbReference type="PDBsum" id="6YWV"/>
<dbReference type="PDBsum" id="6YWX"/>
<dbReference type="PDBsum" id="6YWY"/>
<dbReference type="EMDB" id="EMD-10977"/>
<dbReference type="EMDB" id="EMD-10978"/>
<dbReference type="SMR" id="Q1K7P9"/>
<dbReference type="STRING" id="367110.Q1K7P9"/>
<dbReference type="PaxDb" id="5141-EFNCRP00000003494"/>
<dbReference type="EnsemblFungi" id="EAA32129">
    <property type="protein sequence ID" value="EAA32129"/>
    <property type="gene ID" value="NCU03638"/>
</dbReference>
<dbReference type="GeneID" id="3877497"/>
<dbReference type="KEGG" id="ncr:NCU03638"/>
<dbReference type="VEuPathDB" id="FungiDB:NCU03638"/>
<dbReference type="HOGENOM" id="CLU_129938_0_0_1"/>
<dbReference type="InParanoid" id="Q1K7P9"/>
<dbReference type="OMA" id="ATHASCS"/>
<dbReference type="OrthoDB" id="4585389at2759"/>
<dbReference type="Proteomes" id="UP000001805">
    <property type="component" value="Chromosome 2, Linkage Group V"/>
</dbReference>
<dbReference type="GO" id="GO:0005762">
    <property type="term" value="C:mitochondrial large ribosomal subunit"/>
    <property type="evidence" value="ECO:0000318"/>
    <property type="project" value="GO_Central"/>
</dbReference>
<dbReference type="GO" id="GO:0003735">
    <property type="term" value="F:structural constituent of ribosome"/>
    <property type="evidence" value="ECO:0007669"/>
    <property type="project" value="InterPro"/>
</dbReference>
<dbReference type="GO" id="GO:0006412">
    <property type="term" value="P:translation"/>
    <property type="evidence" value="ECO:0007669"/>
    <property type="project" value="InterPro"/>
</dbReference>
<dbReference type="Gene3D" id="1.10.287.3980">
    <property type="match status" value="1"/>
</dbReference>
<dbReference type="InterPro" id="IPR000271">
    <property type="entry name" value="Ribosomal_bL34"/>
</dbReference>
<dbReference type="NCBIfam" id="TIGR01030">
    <property type="entry name" value="rpmH_bact"/>
    <property type="match status" value="1"/>
</dbReference>
<dbReference type="Pfam" id="PF00468">
    <property type="entry name" value="Ribosomal_L34"/>
    <property type="match status" value="1"/>
</dbReference>
<name>RM34_NEUCR</name>
<organism>
    <name type="scientific">Neurospora crassa (strain ATCC 24698 / 74-OR23-1A / CBS 708.71 / DSM 1257 / FGSC 987)</name>
    <dbReference type="NCBI Taxonomy" id="367110"/>
    <lineage>
        <taxon>Eukaryota</taxon>
        <taxon>Fungi</taxon>
        <taxon>Dikarya</taxon>
        <taxon>Ascomycota</taxon>
        <taxon>Pezizomycotina</taxon>
        <taxon>Sordariomycetes</taxon>
        <taxon>Sordariomycetidae</taxon>
        <taxon>Sordariales</taxon>
        <taxon>Sordariaceae</taxon>
        <taxon>Neurospora</taxon>
    </lineage>
</organism>
<comment type="function">
    <text evidence="4">Component of the mitochondrial ribosome (mitoribosome), a dedicated translation machinery responsible for the synthesis of mitochondrial genome-encoded proteins, including at least some of the essential transmembrane subunits of the mitochondrial respiratory chain. The mitoribosomes are attached to the mitochondrial inner membrane and translation products are cotranslationally integrated into the membrane.</text>
</comment>
<comment type="subunit">
    <text evidence="1">Component of the mitochondrial large ribosomal subunit (mt-LSU). Mature N.crassa 74S mitochondrial ribosomes consist of a small (37S) and a large (54S) subunit. The 37S small subunit contains a 16S ribosomal RNA (16S mt-rRNA) and 32 different proteins. The 54S large subunit contains a 23S rRNA (23S mt-rRNA) and 42 different proteins.</text>
</comment>
<comment type="subcellular location">
    <subcellularLocation>
        <location evidence="1">Mitochondrion</location>
    </subcellularLocation>
</comment>
<comment type="similarity">
    <text evidence="3">Belongs to the bacterial ribosomal protein bL34 family.</text>
</comment>
<evidence type="ECO:0000269" key="1">
    <source>
    </source>
</evidence>
<evidence type="ECO:0000303" key="2">
    <source>
    </source>
</evidence>
<evidence type="ECO:0000305" key="3"/>
<evidence type="ECO:0000305" key="4">
    <source>
    </source>
</evidence>
<evidence type="ECO:0007744" key="5">
    <source>
        <dbReference type="PDB" id="6YWE"/>
    </source>
</evidence>
<evidence type="ECO:0007744" key="6">
    <source>
        <dbReference type="PDB" id="6YWS"/>
    </source>
</evidence>
<evidence type="ECO:0007744" key="7">
    <source>
        <dbReference type="PDB" id="6YWV"/>
    </source>
</evidence>
<evidence type="ECO:0007744" key="8">
    <source>
        <dbReference type="PDB" id="6YWX"/>
    </source>
</evidence>
<keyword id="KW-0002">3D-structure</keyword>
<keyword id="KW-0496">Mitochondrion</keyword>
<keyword id="KW-1185">Reference proteome</keyword>
<keyword id="KW-0687">Ribonucleoprotein</keyword>
<keyword id="KW-0689">Ribosomal protein</keyword>
<feature type="chain" id="PRO_0000458626" description="Large ribosomal subunit protein bL34m">
    <location>
        <begin position="1"/>
        <end position="140"/>
    </location>
</feature>
<sequence length="140" mass="14829">MSRIFSSALQAVFKPSAFLPKTATRSFSILPSLRPATLSSTPSTIFRAPNAITAPSASPSATTGIDGEVLDLLSASSLISSHPALSGLGSQIRCGPRPTMSGATRLVQKRRHGFLSRVKTKNGQKTLKRRLAKGRLRLSA</sequence>
<protein>
    <recommendedName>
        <fullName evidence="2">Large ribosomal subunit protein bL34m</fullName>
    </recommendedName>
</protein>
<proteinExistence type="evidence at protein level"/>